<organism>
    <name type="scientific">Oncorhynchus mykiss</name>
    <name type="common">Rainbow trout</name>
    <name type="synonym">Salmo gairdneri</name>
    <dbReference type="NCBI Taxonomy" id="8022"/>
    <lineage>
        <taxon>Eukaryota</taxon>
        <taxon>Metazoa</taxon>
        <taxon>Chordata</taxon>
        <taxon>Craniata</taxon>
        <taxon>Vertebrata</taxon>
        <taxon>Euteleostomi</taxon>
        <taxon>Actinopterygii</taxon>
        <taxon>Neopterygii</taxon>
        <taxon>Teleostei</taxon>
        <taxon>Protacanthopterygii</taxon>
        <taxon>Salmoniformes</taxon>
        <taxon>Salmonidae</taxon>
        <taxon>Salmoninae</taxon>
        <taxon>Oncorhynchus</taxon>
    </lineage>
</organism>
<comment type="function">
    <text evidence="1">Pore-forming component of the membrane attack complex (MAC), a multiprotein complex activated by the complement cascade, which inserts into a target cell membrane and forms a pore, leading to target cell membrane rupture and cell lysis. The MAC is initiated by proteolytic cleavage of C5 into complement C5b in response to the classical, alternative, lectin and GZMK complement pathways. The complement pathways consist in a cascade of proteins that leads to phagocytosis and breakdown of pathogens and signaling that strengthens the adaptive immune system. Constitutes the pore-forming subunit of the MAC complex: during MAC assembly, C9 associates with the C5b8 intermediate complex, and polymerizes to complete the pore.</text>
</comment>
<comment type="subunit">
    <text evidence="1">Homooligomer; about 20 C9 chains oligomerize to give rise to a huge beta-barrel that forms a 100 Angstrom diameter pore in target membranes. Component of the membrane attack complex (MAC), composed of complement C5b, C6, C7, C8A, C8B, C8G and multiple copies of the pore-forming subunit C9.</text>
</comment>
<comment type="subcellular location">
    <subcellularLocation>
        <location evidence="1">Secreted</location>
    </subcellularLocation>
    <subcellularLocation>
        <location evidence="1">Target cell membrane</location>
        <topology evidence="1">Multi-pass membrane protein</topology>
    </subcellularLocation>
    <text evidence="1">Secreted as soluble monomer. Oligomerizes at target membranes, forming a pre-pore. A conformation change then leads to the formation of a 100 Angstrom diameter pore.</text>
</comment>
<comment type="similarity">
    <text evidence="6">Belongs to the complement C6/C7/C8/C9 family.</text>
</comment>
<evidence type="ECO:0000250" key="1">
    <source>
        <dbReference type="UniProtKB" id="P02748"/>
    </source>
</evidence>
<evidence type="ECO:0000255" key="2"/>
<evidence type="ECO:0000255" key="3">
    <source>
        <dbReference type="PROSITE-ProRule" id="PRU00124"/>
    </source>
</evidence>
<evidence type="ECO:0000255" key="4">
    <source>
        <dbReference type="PROSITE-ProRule" id="PRU00210"/>
    </source>
</evidence>
<evidence type="ECO:0000255" key="5">
    <source>
        <dbReference type="PROSITE-ProRule" id="PRU00745"/>
    </source>
</evidence>
<evidence type="ECO:0000305" key="6"/>
<accession>P06682</accession>
<keyword id="KW-0179">Complement alternate pathway</keyword>
<keyword id="KW-0180">Complement pathway</keyword>
<keyword id="KW-0204">Cytolysis</keyword>
<keyword id="KW-1015">Disulfide bond</keyword>
<keyword id="KW-0245">EGF-like domain</keyword>
<keyword id="KW-0325">Glycoprotein</keyword>
<keyword id="KW-0391">Immunity</keyword>
<keyword id="KW-0399">Innate immunity</keyword>
<keyword id="KW-0472">Membrane</keyword>
<keyword id="KW-0473">Membrane attack complex</keyword>
<keyword id="KW-0677">Repeat</keyword>
<keyword id="KW-0964">Secreted</keyword>
<keyword id="KW-1052">Target cell membrane</keyword>
<keyword id="KW-1053">Target membrane</keyword>
<keyword id="KW-0812">Transmembrane</keyword>
<keyword id="KW-1134">Transmembrane beta strand</keyword>
<reference key="1">
    <citation type="journal article" date="1987" name="EMBO J.">
        <title>Topological mapping of complement component C9 by recombinant DNA techniques suggests a novel mechanism for its insertion into target membranes.</title>
        <authorList>
            <person name="Stanley K.K."/>
            <person name="Herz J."/>
        </authorList>
    </citation>
    <scope>NUCLEOTIDE SEQUENCE [MRNA]</scope>
</reference>
<reference key="2">
    <citation type="journal article" date="1989" name="J. Biol. Chem.">
        <title>Complete primary structure and functional characterization of the sixth component of the human complement system. Identification of the C5b-binding domain in complement C6.</title>
        <authorList>
            <person name="Haefliger J.-A."/>
            <person name="Tschopp J."/>
            <person name="Vial N."/>
            <person name="Jenne D.E."/>
        </authorList>
    </citation>
    <scope>SEQUENCE REVISION</scope>
</reference>
<gene>
    <name type="primary">c9</name>
</gene>
<name>CO9_ONCMY</name>
<sequence length="574" mass="64033">QANGTLGRSRWLPLDPVDCVWSRWSEWTPCNSCTKIRHRSRSVEVFGQFGGKPCQGQPIGEQQRCTSDAVCEQALPSECSSIEFTCESGACIKLRLSCNGDYDCEDGSDEDCEPVRKPCGTKLYDTNEQGRTAGYGINILGMEPRINPFNNDYFNGMCNKVKNINNNEYNRLPWNVGLLNYETIAEETVSKEIYEDTYTLLRELMTETKLTVSAGLNLKFTPTEKSMAKSNTTVSGGVGLDAEYDRTQMIKEVSEYTTIKNKSFMRVNGRVQLSTYRMRSRDLQVAGEFLEHVKSLPLEYEKGQYFSFLEDYGTHYTRNGKSGGEHQLVYVLNQDTIKDKKLTERKLQDCIKVGISANFDTNIGIGGDAHIRPGHCKDTVNKNTAEKEGKALVDKVITVVRGGTLEAAVAMRTQITKEGLMDVKTYQNWARTVGDAPALLSSEPEPIQTLIPLSMPDANTRRLNMQRATQEYEAEYSVCKCKPCHNGGSLALLDGKCLCLCLPQFEGLACQDAKADNNKNTKTPVRVFLEKGNWSCWAAWSGCSGGKRIRTRSCNTQGLSDATCRGDIVTEDYC</sequence>
<dbReference type="EMBL" id="X05474">
    <property type="protein sequence ID" value="CAA29037.1"/>
    <property type="status" value="ALT_SEQ"/>
    <property type="molecule type" value="mRNA"/>
</dbReference>
<dbReference type="PIR" id="B29677">
    <property type="entry name" value="B29677"/>
</dbReference>
<dbReference type="SMR" id="P06682"/>
<dbReference type="GlyCosmos" id="P06682">
    <property type="glycosylation" value="4 sites, No reported glycans"/>
</dbReference>
<dbReference type="Proteomes" id="UP000694395">
    <property type="component" value="Unplaced"/>
</dbReference>
<dbReference type="GO" id="GO:0005615">
    <property type="term" value="C:extracellular space"/>
    <property type="evidence" value="ECO:0000250"/>
    <property type="project" value="UniProtKB"/>
</dbReference>
<dbReference type="GO" id="GO:0005579">
    <property type="term" value="C:membrane attack complex"/>
    <property type="evidence" value="ECO:0000250"/>
    <property type="project" value="UniProtKB"/>
</dbReference>
<dbReference type="GO" id="GO:0044218">
    <property type="term" value="C:other organism cell membrane"/>
    <property type="evidence" value="ECO:0007669"/>
    <property type="project" value="UniProtKB-KW"/>
</dbReference>
<dbReference type="GO" id="GO:0005886">
    <property type="term" value="C:plasma membrane"/>
    <property type="evidence" value="ECO:0000250"/>
    <property type="project" value="UniProtKB"/>
</dbReference>
<dbReference type="GO" id="GO:0001906">
    <property type="term" value="P:cell killing"/>
    <property type="evidence" value="ECO:0000250"/>
    <property type="project" value="UniProtKB"/>
</dbReference>
<dbReference type="GO" id="GO:0006957">
    <property type="term" value="P:complement activation, alternative pathway"/>
    <property type="evidence" value="ECO:0007669"/>
    <property type="project" value="UniProtKB-KW"/>
</dbReference>
<dbReference type="GO" id="GO:0006958">
    <property type="term" value="P:complement activation, classical pathway"/>
    <property type="evidence" value="ECO:0007669"/>
    <property type="project" value="UniProtKB-KW"/>
</dbReference>
<dbReference type="GO" id="GO:0031640">
    <property type="term" value="P:killing of cells of another organism"/>
    <property type="evidence" value="ECO:0007669"/>
    <property type="project" value="UniProtKB-KW"/>
</dbReference>
<dbReference type="GO" id="GO:0051260">
    <property type="term" value="P:protein homooligomerization"/>
    <property type="evidence" value="ECO:0000250"/>
    <property type="project" value="UniProtKB"/>
</dbReference>
<dbReference type="CDD" id="cd00112">
    <property type="entry name" value="LDLa"/>
    <property type="match status" value="1"/>
</dbReference>
<dbReference type="FunFam" id="2.20.100.10:FF:000089">
    <property type="entry name" value="Complement component C9"/>
    <property type="match status" value="1"/>
</dbReference>
<dbReference type="Gene3D" id="2.10.25.10">
    <property type="entry name" value="Laminin"/>
    <property type="match status" value="1"/>
</dbReference>
<dbReference type="Gene3D" id="4.10.400.10">
    <property type="entry name" value="Low-density Lipoprotein Receptor"/>
    <property type="match status" value="1"/>
</dbReference>
<dbReference type="Gene3D" id="2.20.100.10">
    <property type="entry name" value="Thrombospondin type-1 (TSP1) repeat"/>
    <property type="match status" value="1"/>
</dbReference>
<dbReference type="InterPro" id="IPR036055">
    <property type="entry name" value="LDL_receptor-like_sf"/>
</dbReference>
<dbReference type="InterPro" id="IPR023415">
    <property type="entry name" value="LDLR_class-A_CS"/>
</dbReference>
<dbReference type="InterPro" id="IPR002172">
    <property type="entry name" value="LDrepeatLR_classA_rpt"/>
</dbReference>
<dbReference type="InterPro" id="IPR001862">
    <property type="entry name" value="MAC_perforin"/>
</dbReference>
<dbReference type="InterPro" id="IPR020864">
    <property type="entry name" value="MACPF"/>
</dbReference>
<dbReference type="InterPro" id="IPR020863">
    <property type="entry name" value="MACPF_CS"/>
</dbReference>
<dbReference type="InterPro" id="IPR000884">
    <property type="entry name" value="TSP1_rpt"/>
</dbReference>
<dbReference type="InterPro" id="IPR036383">
    <property type="entry name" value="TSP1_rpt_sf"/>
</dbReference>
<dbReference type="PANTHER" id="PTHR45742">
    <property type="entry name" value="COMPLEMENT COMPONENT C6"/>
    <property type="match status" value="1"/>
</dbReference>
<dbReference type="PANTHER" id="PTHR45742:SF3">
    <property type="entry name" value="COMPLEMENT COMPONENT C9"/>
    <property type="match status" value="1"/>
</dbReference>
<dbReference type="Pfam" id="PF00057">
    <property type="entry name" value="Ldl_recept_a"/>
    <property type="match status" value="1"/>
</dbReference>
<dbReference type="Pfam" id="PF01823">
    <property type="entry name" value="MACPF"/>
    <property type="match status" value="1"/>
</dbReference>
<dbReference type="PRINTS" id="PR00764">
    <property type="entry name" value="COMPLEMENTC9"/>
</dbReference>
<dbReference type="SMART" id="SM00192">
    <property type="entry name" value="LDLa"/>
    <property type="match status" value="1"/>
</dbReference>
<dbReference type="SMART" id="SM00457">
    <property type="entry name" value="MACPF"/>
    <property type="match status" value="1"/>
</dbReference>
<dbReference type="SMART" id="SM00209">
    <property type="entry name" value="TSP1"/>
    <property type="match status" value="2"/>
</dbReference>
<dbReference type="SUPFAM" id="SSF57424">
    <property type="entry name" value="LDL receptor-like module"/>
    <property type="match status" value="1"/>
</dbReference>
<dbReference type="SUPFAM" id="SSF82895">
    <property type="entry name" value="TSP-1 type 1 repeat"/>
    <property type="match status" value="2"/>
</dbReference>
<dbReference type="PROSITE" id="PS00022">
    <property type="entry name" value="EGF_1"/>
    <property type="match status" value="1"/>
</dbReference>
<dbReference type="PROSITE" id="PS01209">
    <property type="entry name" value="LDLRA_1"/>
    <property type="match status" value="1"/>
</dbReference>
<dbReference type="PROSITE" id="PS50068">
    <property type="entry name" value="LDLRA_2"/>
    <property type="match status" value="1"/>
</dbReference>
<dbReference type="PROSITE" id="PS00279">
    <property type="entry name" value="MACPF_1"/>
    <property type="match status" value="1"/>
</dbReference>
<dbReference type="PROSITE" id="PS51412">
    <property type="entry name" value="MACPF_2"/>
    <property type="match status" value="1"/>
</dbReference>
<dbReference type="PROSITE" id="PS50092">
    <property type="entry name" value="TSP1"/>
    <property type="match status" value="2"/>
</dbReference>
<feature type="chain" id="PRO_0000162510" description="Complement component C9">
    <location>
        <begin position="1" status="less than"/>
        <end position="574"/>
    </location>
</feature>
<feature type="transmembrane region" description="Beta stranded" evidence="1">
    <location>
        <begin position="212"/>
        <end position="219"/>
    </location>
</feature>
<feature type="transmembrane region" description="Beta stranded" evidence="1">
    <location>
        <begin position="235"/>
        <end position="242"/>
    </location>
</feature>
<feature type="transmembrane region" description="Beta stranded" evidence="1">
    <location>
        <begin position="344"/>
        <end position="351"/>
    </location>
</feature>
<feature type="transmembrane region" description="Beta stranded" evidence="1">
    <location>
        <begin position="352"/>
        <end position="360"/>
    </location>
</feature>
<feature type="domain" description="TSP type-1 1" evidence="4">
    <location>
        <begin position="18"/>
        <end position="72"/>
    </location>
</feature>
<feature type="domain" description="LDL-receptor class A" evidence="3">
    <location>
        <begin position="77"/>
        <end position="117"/>
    </location>
</feature>
<feature type="domain" description="MACPF" evidence="5">
    <location>
        <begin position="115"/>
        <end position="480"/>
    </location>
</feature>
<feature type="domain" description="EGF-like">
    <location>
        <begin position="481"/>
        <end position="511"/>
    </location>
</feature>
<feature type="domain" description="TSP type-1 2" evidence="4">
    <location>
        <begin position="531"/>
        <end position="572"/>
    </location>
</feature>
<feature type="glycosylation site" description="N-linked (GlcNAc...) asparagine" evidence="2">
    <location>
        <position position="3"/>
    </location>
</feature>
<feature type="glycosylation site" description="N-linked (GlcNAc...) asparagine" evidence="2">
    <location>
        <position position="231"/>
    </location>
</feature>
<feature type="glycosylation site" description="N-linked (GlcNAc...) asparagine" evidence="2">
    <location>
        <position position="261"/>
    </location>
</feature>
<feature type="glycosylation site" description="N-linked (GlcNAc...) asparagine" evidence="2">
    <location>
        <position position="533"/>
    </location>
</feature>
<feature type="disulfide bond" evidence="1">
    <location>
        <begin position="19"/>
        <end position="54"/>
    </location>
</feature>
<feature type="disulfide bond" evidence="1">
    <location>
        <begin position="30"/>
        <end position="65"/>
    </location>
</feature>
<feature type="disulfide bond" evidence="1">
    <location>
        <begin position="33"/>
        <end position="71"/>
    </location>
</feature>
<feature type="disulfide bond" evidence="1">
    <location>
        <begin position="79"/>
        <end position="91"/>
    </location>
</feature>
<feature type="disulfide bond" evidence="1">
    <location>
        <begin position="86"/>
        <end position="104"/>
    </location>
</feature>
<feature type="disulfide bond" evidence="1">
    <location>
        <begin position="98"/>
        <end position="112"/>
    </location>
</feature>
<feature type="disulfide bond" evidence="1">
    <location>
        <begin position="119"/>
        <end position="158"/>
    </location>
</feature>
<feature type="disulfide bond" evidence="1">
    <location>
        <begin position="350"/>
        <end position="376"/>
    </location>
</feature>
<feature type="disulfide bond" evidence="1">
    <location>
        <begin position="481"/>
        <end position="497"/>
    </location>
</feature>
<feature type="disulfide bond" evidence="1">
    <location>
        <begin position="484"/>
        <end position="499"/>
    </location>
</feature>
<feature type="disulfide bond" evidence="1">
    <location>
        <begin position="501"/>
        <end position="510"/>
    </location>
</feature>
<feature type="non-terminal residue">
    <location>
        <position position="1"/>
    </location>
</feature>
<proteinExistence type="evidence at transcript level"/>
<protein>
    <recommendedName>
        <fullName>Complement component C9</fullName>
    </recommendedName>
</protein>